<sequence>MPVITLPDGSQRSFEQAVSVMDVALDIGPGLAKATIAGRIDGNLVDACELITQDASLQLITSKDSEGLEIIRHSCAHLLGHAIKQLYPNVKMAIGPTIENGFYYDIDLDESISEDDLVKLEKRMTELARTGYEVVKKTGSWQDAYDAFTERGETYKLAILDENIEKTDTPALYHHQEYIDMCRGPHVPSMRHCHHFKLMKVAGAYWRGDSDNKMLQRIYGTAWADKKQLKAYIVRLAEAEKRDHRKIGKTLDLFHWQEEAPGMVFWHNDGWTIYTELEKFIREKLHEYDYDEVKAPMMMDRSLWEKSGHWDKYADGMFTTTSEKREYAIKPMNCPGHVQIFNQGLKSYRDLPLRIAEFGCCHRNEPSGSLHGLMRVRGFTQDDAHIFCMESQVQAEVKKCIEMVYDVYGSFGFEDVVVKLSTRPDNRIGSDEIWDKAEAGLAQALTDSNIAFEYLPGEGAFYGPKIEFTLMDCLGRAWQCGTVQLDFALPERLGATYVGEDNERYTPVMIHRAILGSLERFIGILIEEFTGKFPTWLSPIQTTIMNITDKQAPYCEKVVKKLKENGFRAKIDLRNEKIGFKIREHTLKRVPYLLVVGDKEMESGEISVRTRSGEDLGKMSVDDFIAKLSDEVKSRQ</sequence>
<comment type="function">
    <text evidence="1">Catalyzes the attachment of threonine to tRNA(Thr) in a two-step reaction: L-threonine is first activated by ATP to form Thr-AMP and then transferred to the acceptor end of tRNA(Thr). Also edits incorrectly charged L-seryl-tRNA(Thr).</text>
</comment>
<comment type="catalytic activity">
    <reaction evidence="1">
        <text>tRNA(Thr) + L-threonine + ATP = L-threonyl-tRNA(Thr) + AMP + diphosphate + H(+)</text>
        <dbReference type="Rhea" id="RHEA:24624"/>
        <dbReference type="Rhea" id="RHEA-COMP:9670"/>
        <dbReference type="Rhea" id="RHEA-COMP:9704"/>
        <dbReference type="ChEBI" id="CHEBI:15378"/>
        <dbReference type="ChEBI" id="CHEBI:30616"/>
        <dbReference type="ChEBI" id="CHEBI:33019"/>
        <dbReference type="ChEBI" id="CHEBI:57926"/>
        <dbReference type="ChEBI" id="CHEBI:78442"/>
        <dbReference type="ChEBI" id="CHEBI:78534"/>
        <dbReference type="ChEBI" id="CHEBI:456215"/>
        <dbReference type="EC" id="6.1.1.3"/>
    </reaction>
</comment>
<comment type="cofactor">
    <cofactor evidence="1">
        <name>Zn(2+)</name>
        <dbReference type="ChEBI" id="CHEBI:29105"/>
    </cofactor>
    <text evidence="1">Binds 1 zinc ion per subunit.</text>
</comment>
<comment type="subunit">
    <text evidence="1">Homodimer.</text>
</comment>
<comment type="subcellular location">
    <subcellularLocation>
        <location evidence="1">Cytoplasm</location>
    </subcellularLocation>
</comment>
<comment type="similarity">
    <text evidence="1">Belongs to the class-II aminoacyl-tRNA synthetase family.</text>
</comment>
<keyword id="KW-0030">Aminoacyl-tRNA synthetase</keyword>
<keyword id="KW-0067">ATP-binding</keyword>
<keyword id="KW-0963">Cytoplasm</keyword>
<keyword id="KW-0436">Ligase</keyword>
<keyword id="KW-0479">Metal-binding</keyword>
<keyword id="KW-0547">Nucleotide-binding</keyword>
<keyword id="KW-0648">Protein biosynthesis</keyword>
<keyword id="KW-0694">RNA-binding</keyword>
<keyword id="KW-0820">tRNA-binding</keyword>
<keyword id="KW-0862">Zinc</keyword>
<evidence type="ECO:0000255" key="1">
    <source>
        <dbReference type="HAMAP-Rule" id="MF_00184"/>
    </source>
</evidence>
<evidence type="ECO:0000255" key="2">
    <source>
        <dbReference type="PROSITE-ProRule" id="PRU01228"/>
    </source>
</evidence>
<dbReference type="EC" id="6.1.1.3" evidence="1"/>
<dbReference type="EMBL" id="CP000083">
    <property type="protein sequence ID" value="AAZ28432.1"/>
    <property type="molecule type" value="Genomic_DNA"/>
</dbReference>
<dbReference type="RefSeq" id="WP_011043702.1">
    <property type="nucleotide sequence ID" value="NC_003910.7"/>
</dbReference>
<dbReference type="SMR" id="Q480A9"/>
<dbReference type="STRING" id="167879.CPS_2909"/>
<dbReference type="KEGG" id="cps:CPS_2909"/>
<dbReference type="eggNOG" id="COG0441">
    <property type="taxonomic scope" value="Bacteria"/>
</dbReference>
<dbReference type="HOGENOM" id="CLU_008554_0_1_6"/>
<dbReference type="Proteomes" id="UP000000547">
    <property type="component" value="Chromosome"/>
</dbReference>
<dbReference type="GO" id="GO:0005829">
    <property type="term" value="C:cytosol"/>
    <property type="evidence" value="ECO:0007669"/>
    <property type="project" value="TreeGrafter"/>
</dbReference>
<dbReference type="GO" id="GO:0005524">
    <property type="term" value="F:ATP binding"/>
    <property type="evidence" value="ECO:0007669"/>
    <property type="project" value="UniProtKB-UniRule"/>
</dbReference>
<dbReference type="GO" id="GO:0046872">
    <property type="term" value="F:metal ion binding"/>
    <property type="evidence" value="ECO:0007669"/>
    <property type="project" value="UniProtKB-KW"/>
</dbReference>
<dbReference type="GO" id="GO:0004829">
    <property type="term" value="F:threonine-tRNA ligase activity"/>
    <property type="evidence" value="ECO:0007669"/>
    <property type="project" value="UniProtKB-UniRule"/>
</dbReference>
<dbReference type="GO" id="GO:0000049">
    <property type="term" value="F:tRNA binding"/>
    <property type="evidence" value="ECO:0007669"/>
    <property type="project" value="UniProtKB-KW"/>
</dbReference>
<dbReference type="GO" id="GO:0006435">
    <property type="term" value="P:threonyl-tRNA aminoacylation"/>
    <property type="evidence" value="ECO:0007669"/>
    <property type="project" value="UniProtKB-UniRule"/>
</dbReference>
<dbReference type="CDD" id="cd01667">
    <property type="entry name" value="TGS_ThrRS"/>
    <property type="match status" value="1"/>
</dbReference>
<dbReference type="CDD" id="cd00860">
    <property type="entry name" value="ThrRS_anticodon"/>
    <property type="match status" value="1"/>
</dbReference>
<dbReference type="CDD" id="cd00771">
    <property type="entry name" value="ThrRS_core"/>
    <property type="match status" value="1"/>
</dbReference>
<dbReference type="FunFam" id="3.10.20.30:FF:000005">
    <property type="entry name" value="Threonine--tRNA ligase"/>
    <property type="match status" value="1"/>
</dbReference>
<dbReference type="FunFam" id="3.30.54.20:FF:000002">
    <property type="entry name" value="Threonine--tRNA ligase"/>
    <property type="match status" value="1"/>
</dbReference>
<dbReference type="FunFam" id="3.30.930.10:FF:000002">
    <property type="entry name" value="Threonine--tRNA ligase"/>
    <property type="match status" value="1"/>
</dbReference>
<dbReference type="FunFam" id="3.40.50.800:FF:000001">
    <property type="entry name" value="Threonine--tRNA ligase"/>
    <property type="match status" value="1"/>
</dbReference>
<dbReference type="FunFam" id="3.30.980.10:FF:000005">
    <property type="entry name" value="Threonyl-tRNA synthetase, mitochondrial"/>
    <property type="match status" value="1"/>
</dbReference>
<dbReference type="Gene3D" id="3.10.20.30">
    <property type="match status" value="1"/>
</dbReference>
<dbReference type="Gene3D" id="3.30.54.20">
    <property type="match status" value="1"/>
</dbReference>
<dbReference type="Gene3D" id="3.40.50.800">
    <property type="entry name" value="Anticodon-binding domain"/>
    <property type="match status" value="1"/>
</dbReference>
<dbReference type="Gene3D" id="3.30.930.10">
    <property type="entry name" value="Bira Bifunctional Protein, Domain 2"/>
    <property type="match status" value="1"/>
</dbReference>
<dbReference type="Gene3D" id="3.30.980.10">
    <property type="entry name" value="Threonyl-trna Synthetase, Chain A, domain 2"/>
    <property type="match status" value="1"/>
</dbReference>
<dbReference type="HAMAP" id="MF_00184">
    <property type="entry name" value="Thr_tRNA_synth"/>
    <property type="match status" value="1"/>
</dbReference>
<dbReference type="InterPro" id="IPR002314">
    <property type="entry name" value="aa-tRNA-synt_IIb"/>
</dbReference>
<dbReference type="InterPro" id="IPR006195">
    <property type="entry name" value="aa-tRNA-synth_II"/>
</dbReference>
<dbReference type="InterPro" id="IPR045864">
    <property type="entry name" value="aa-tRNA-synth_II/BPL/LPL"/>
</dbReference>
<dbReference type="InterPro" id="IPR004154">
    <property type="entry name" value="Anticodon-bd"/>
</dbReference>
<dbReference type="InterPro" id="IPR036621">
    <property type="entry name" value="Anticodon-bd_dom_sf"/>
</dbReference>
<dbReference type="InterPro" id="IPR012675">
    <property type="entry name" value="Beta-grasp_dom_sf"/>
</dbReference>
<dbReference type="InterPro" id="IPR004095">
    <property type="entry name" value="TGS"/>
</dbReference>
<dbReference type="InterPro" id="IPR012676">
    <property type="entry name" value="TGS-like"/>
</dbReference>
<dbReference type="InterPro" id="IPR002320">
    <property type="entry name" value="Thr-tRNA-ligase_IIa"/>
</dbReference>
<dbReference type="InterPro" id="IPR018163">
    <property type="entry name" value="Thr/Ala-tRNA-synth_IIc_edit"/>
</dbReference>
<dbReference type="InterPro" id="IPR047246">
    <property type="entry name" value="ThrRS_anticodon"/>
</dbReference>
<dbReference type="InterPro" id="IPR033728">
    <property type="entry name" value="ThrRS_core"/>
</dbReference>
<dbReference type="InterPro" id="IPR012947">
    <property type="entry name" value="tRNA_SAD"/>
</dbReference>
<dbReference type="NCBIfam" id="TIGR00418">
    <property type="entry name" value="thrS"/>
    <property type="match status" value="1"/>
</dbReference>
<dbReference type="PANTHER" id="PTHR11451:SF44">
    <property type="entry name" value="THREONINE--TRNA LIGASE, CHLOROPLASTIC_MITOCHONDRIAL 2"/>
    <property type="match status" value="1"/>
</dbReference>
<dbReference type="PANTHER" id="PTHR11451">
    <property type="entry name" value="THREONINE-TRNA LIGASE"/>
    <property type="match status" value="1"/>
</dbReference>
<dbReference type="Pfam" id="PF03129">
    <property type="entry name" value="HGTP_anticodon"/>
    <property type="match status" value="1"/>
</dbReference>
<dbReference type="Pfam" id="PF02824">
    <property type="entry name" value="TGS"/>
    <property type="match status" value="1"/>
</dbReference>
<dbReference type="Pfam" id="PF00587">
    <property type="entry name" value="tRNA-synt_2b"/>
    <property type="match status" value="1"/>
</dbReference>
<dbReference type="Pfam" id="PF07973">
    <property type="entry name" value="tRNA_SAD"/>
    <property type="match status" value="1"/>
</dbReference>
<dbReference type="PRINTS" id="PR01047">
    <property type="entry name" value="TRNASYNTHTHR"/>
</dbReference>
<dbReference type="SMART" id="SM00863">
    <property type="entry name" value="tRNA_SAD"/>
    <property type="match status" value="1"/>
</dbReference>
<dbReference type="SUPFAM" id="SSF52954">
    <property type="entry name" value="Class II aaRS ABD-related"/>
    <property type="match status" value="1"/>
</dbReference>
<dbReference type="SUPFAM" id="SSF55681">
    <property type="entry name" value="Class II aaRS and biotin synthetases"/>
    <property type="match status" value="1"/>
</dbReference>
<dbReference type="SUPFAM" id="SSF81271">
    <property type="entry name" value="TGS-like"/>
    <property type="match status" value="1"/>
</dbReference>
<dbReference type="SUPFAM" id="SSF55186">
    <property type="entry name" value="ThrRS/AlaRS common domain"/>
    <property type="match status" value="1"/>
</dbReference>
<dbReference type="PROSITE" id="PS50862">
    <property type="entry name" value="AA_TRNA_LIGASE_II"/>
    <property type="match status" value="1"/>
</dbReference>
<dbReference type="PROSITE" id="PS51880">
    <property type="entry name" value="TGS"/>
    <property type="match status" value="1"/>
</dbReference>
<organism>
    <name type="scientific">Colwellia psychrerythraea (strain 34H / ATCC BAA-681)</name>
    <name type="common">Vibrio psychroerythus</name>
    <dbReference type="NCBI Taxonomy" id="167879"/>
    <lineage>
        <taxon>Bacteria</taxon>
        <taxon>Pseudomonadati</taxon>
        <taxon>Pseudomonadota</taxon>
        <taxon>Gammaproteobacteria</taxon>
        <taxon>Alteromonadales</taxon>
        <taxon>Colwelliaceae</taxon>
        <taxon>Colwellia</taxon>
    </lineage>
</organism>
<accession>Q480A9</accession>
<proteinExistence type="inferred from homology"/>
<protein>
    <recommendedName>
        <fullName evidence="1">Threonine--tRNA ligase</fullName>
        <ecNumber evidence="1">6.1.1.3</ecNumber>
    </recommendedName>
    <alternativeName>
        <fullName evidence="1">Threonyl-tRNA synthetase</fullName>
        <shortName evidence="1">ThrRS</shortName>
    </alternativeName>
</protein>
<gene>
    <name evidence="1" type="primary">thrS</name>
    <name type="ordered locus">CPS_2909</name>
</gene>
<name>SYT_COLP3</name>
<reference key="1">
    <citation type="journal article" date="2005" name="Proc. Natl. Acad. Sci. U.S.A.">
        <title>The psychrophilic lifestyle as revealed by the genome sequence of Colwellia psychrerythraea 34H through genomic and proteomic analyses.</title>
        <authorList>
            <person name="Methe B.A."/>
            <person name="Nelson K.E."/>
            <person name="Deming J.W."/>
            <person name="Momen B."/>
            <person name="Melamud E."/>
            <person name="Zhang X."/>
            <person name="Moult J."/>
            <person name="Madupu R."/>
            <person name="Nelson W.C."/>
            <person name="Dodson R.J."/>
            <person name="Brinkac L.M."/>
            <person name="Daugherty S.C."/>
            <person name="Durkin A.S."/>
            <person name="DeBoy R.T."/>
            <person name="Kolonay J.F."/>
            <person name="Sullivan S.A."/>
            <person name="Zhou L."/>
            <person name="Davidsen T.M."/>
            <person name="Wu M."/>
            <person name="Huston A.L."/>
            <person name="Lewis M."/>
            <person name="Weaver B."/>
            <person name="Weidman J.F."/>
            <person name="Khouri H."/>
            <person name="Utterback T.R."/>
            <person name="Feldblyum T.V."/>
            <person name="Fraser C.M."/>
        </authorList>
    </citation>
    <scope>NUCLEOTIDE SEQUENCE [LARGE SCALE GENOMIC DNA]</scope>
    <source>
        <strain>34H / ATCC BAA-681</strain>
    </source>
</reference>
<feature type="chain" id="PRO_1000020376" description="Threonine--tRNA ligase">
    <location>
        <begin position="1"/>
        <end position="636"/>
    </location>
</feature>
<feature type="domain" description="TGS" evidence="2">
    <location>
        <begin position="1"/>
        <end position="61"/>
    </location>
</feature>
<feature type="region of interest" description="Catalytic" evidence="1">
    <location>
        <begin position="243"/>
        <end position="534"/>
    </location>
</feature>
<feature type="binding site" evidence="1">
    <location>
        <position position="334"/>
    </location>
    <ligand>
        <name>Zn(2+)</name>
        <dbReference type="ChEBI" id="CHEBI:29105"/>
    </ligand>
</feature>
<feature type="binding site" evidence="1">
    <location>
        <position position="385"/>
    </location>
    <ligand>
        <name>Zn(2+)</name>
        <dbReference type="ChEBI" id="CHEBI:29105"/>
    </ligand>
</feature>
<feature type="binding site" evidence="1">
    <location>
        <position position="511"/>
    </location>
    <ligand>
        <name>Zn(2+)</name>
        <dbReference type="ChEBI" id="CHEBI:29105"/>
    </ligand>
</feature>